<comment type="function">
    <text evidence="1">GTPase that plays an essential role in the late steps of ribosome biogenesis.</text>
</comment>
<comment type="subunit">
    <text evidence="1">Associates with the 50S ribosomal subunit.</text>
</comment>
<comment type="similarity">
    <text evidence="1">Belongs to the TRAFAC class TrmE-Era-EngA-EngB-Septin-like GTPase superfamily. EngA (Der) GTPase family.</text>
</comment>
<gene>
    <name evidence="1" type="primary">der</name>
    <name type="synonym">engA</name>
    <name type="ordered locus">Pput_0887</name>
</gene>
<dbReference type="EMBL" id="CP000712">
    <property type="protein sequence ID" value="ABQ77049.1"/>
    <property type="molecule type" value="Genomic_DNA"/>
</dbReference>
<dbReference type="SMR" id="A5VYT9"/>
<dbReference type="KEGG" id="ppf:Pput_0887"/>
<dbReference type="eggNOG" id="COG1160">
    <property type="taxonomic scope" value="Bacteria"/>
</dbReference>
<dbReference type="HOGENOM" id="CLU_016077_6_2_6"/>
<dbReference type="GO" id="GO:0005525">
    <property type="term" value="F:GTP binding"/>
    <property type="evidence" value="ECO:0007669"/>
    <property type="project" value="UniProtKB-UniRule"/>
</dbReference>
<dbReference type="GO" id="GO:0043022">
    <property type="term" value="F:ribosome binding"/>
    <property type="evidence" value="ECO:0007669"/>
    <property type="project" value="TreeGrafter"/>
</dbReference>
<dbReference type="GO" id="GO:0042254">
    <property type="term" value="P:ribosome biogenesis"/>
    <property type="evidence" value="ECO:0007669"/>
    <property type="project" value="UniProtKB-KW"/>
</dbReference>
<dbReference type="CDD" id="cd01894">
    <property type="entry name" value="EngA1"/>
    <property type="match status" value="1"/>
</dbReference>
<dbReference type="CDD" id="cd01895">
    <property type="entry name" value="EngA2"/>
    <property type="match status" value="1"/>
</dbReference>
<dbReference type="FunFam" id="3.30.300.20:FF:000004">
    <property type="entry name" value="GTPase Der"/>
    <property type="match status" value="1"/>
</dbReference>
<dbReference type="FunFam" id="3.40.50.300:FF:000040">
    <property type="entry name" value="GTPase Der"/>
    <property type="match status" value="1"/>
</dbReference>
<dbReference type="FunFam" id="3.40.50.300:FF:000057">
    <property type="entry name" value="GTPase Der"/>
    <property type="match status" value="1"/>
</dbReference>
<dbReference type="Gene3D" id="3.30.300.20">
    <property type="match status" value="1"/>
</dbReference>
<dbReference type="Gene3D" id="3.40.50.300">
    <property type="entry name" value="P-loop containing nucleotide triphosphate hydrolases"/>
    <property type="match status" value="2"/>
</dbReference>
<dbReference type="HAMAP" id="MF_00195">
    <property type="entry name" value="GTPase_Der"/>
    <property type="match status" value="1"/>
</dbReference>
<dbReference type="InterPro" id="IPR031166">
    <property type="entry name" value="G_ENGA"/>
</dbReference>
<dbReference type="InterPro" id="IPR006073">
    <property type="entry name" value="GTP-bd"/>
</dbReference>
<dbReference type="InterPro" id="IPR016484">
    <property type="entry name" value="GTPase_Der"/>
</dbReference>
<dbReference type="InterPro" id="IPR032859">
    <property type="entry name" value="KH_dom-like"/>
</dbReference>
<dbReference type="InterPro" id="IPR015946">
    <property type="entry name" value="KH_dom-like_a/b"/>
</dbReference>
<dbReference type="InterPro" id="IPR027417">
    <property type="entry name" value="P-loop_NTPase"/>
</dbReference>
<dbReference type="InterPro" id="IPR005225">
    <property type="entry name" value="Small_GTP-bd"/>
</dbReference>
<dbReference type="NCBIfam" id="TIGR03594">
    <property type="entry name" value="GTPase_EngA"/>
    <property type="match status" value="1"/>
</dbReference>
<dbReference type="NCBIfam" id="TIGR00231">
    <property type="entry name" value="small_GTP"/>
    <property type="match status" value="2"/>
</dbReference>
<dbReference type="PANTHER" id="PTHR43834">
    <property type="entry name" value="GTPASE DER"/>
    <property type="match status" value="1"/>
</dbReference>
<dbReference type="PANTHER" id="PTHR43834:SF6">
    <property type="entry name" value="GTPASE DER"/>
    <property type="match status" value="1"/>
</dbReference>
<dbReference type="Pfam" id="PF14714">
    <property type="entry name" value="KH_dom-like"/>
    <property type="match status" value="1"/>
</dbReference>
<dbReference type="Pfam" id="PF01926">
    <property type="entry name" value="MMR_HSR1"/>
    <property type="match status" value="2"/>
</dbReference>
<dbReference type="PIRSF" id="PIRSF006485">
    <property type="entry name" value="GTP-binding_EngA"/>
    <property type="match status" value="1"/>
</dbReference>
<dbReference type="PRINTS" id="PR00326">
    <property type="entry name" value="GTP1OBG"/>
</dbReference>
<dbReference type="SUPFAM" id="SSF52540">
    <property type="entry name" value="P-loop containing nucleoside triphosphate hydrolases"/>
    <property type="match status" value="2"/>
</dbReference>
<dbReference type="PROSITE" id="PS51712">
    <property type="entry name" value="G_ENGA"/>
    <property type="match status" value="2"/>
</dbReference>
<proteinExistence type="inferred from homology"/>
<evidence type="ECO:0000255" key="1">
    <source>
        <dbReference type="HAMAP-Rule" id="MF_00195"/>
    </source>
</evidence>
<evidence type="ECO:0000256" key="2">
    <source>
        <dbReference type="SAM" id="MobiDB-lite"/>
    </source>
</evidence>
<protein>
    <recommendedName>
        <fullName evidence="1">GTPase Der</fullName>
    </recommendedName>
    <alternativeName>
        <fullName evidence="1">GTP-binding protein EngA</fullName>
    </alternativeName>
</protein>
<name>DER_PSEP1</name>
<organism>
    <name type="scientific">Pseudomonas putida (strain ATCC 700007 / DSM 6899 / JCM 31910 / BCRC 17059 / LMG 24140 / F1)</name>
    <dbReference type="NCBI Taxonomy" id="351746"/>
    <lineage>
        <taxon>Bacteria</taxon>
        <taxon>Pseudomonadati</taxon>
        <taxon>Pseudomonadota</taxon>
        <taxon>Gammaproteobacteria</taxon>
        <taxon>Pseudomonadales</taxon>
        <taxon>Pseudomonadaceae</taxon>
        <taxon>Pseudomonas</taxon>
    </lineage>
</organism>
<accession>A5VYT9</accession>
<keyword id="KW-0342">GTP-binding</keyword>
<keyword id="KW-0547">Nucleotide-binding</keyword>
<keyword id="KW-0677">Repeat</keyword>
<keyword id="KW-0690">Ribosome biogenesis</keyword>
<reference key="1">
    <citation type="submission" date="2007-05" db="EMBL/GenBank/DDBJ databases">
        <title>Complete sequence of Pseudomonas putida F1.</title>
        <authorList>
            <consortium name="US DOE Joint Genome Institute"/>
            <person name="Copeland A."/>
            <person name="Lucas S."/>
            <person name="Lapidus A."/>
            <person name="Barry K."/>
            <person name="Detter J.C."/>
            <person name="Glavina del Rio T."/>
            <person name="Hammon N."/>
            <person name="Israni S."/>
            <person name="Dalin E."/>
            <person name="Tice H."/>
            <person name="Pitluck S."/>
            <person name="Chain P."/>
            <person name="Malfatti S."/>
            <person name="Shin M."/>
            <person name="Vergez L."/>
            <person name="Schmutz J."/>
            <person name="Larimer F."/>
            <person name="Land M."/>
            <person name="Hauser L."/>
            <person name="Kyrpides N."/>
            <person name="Lykidis A."/>
            <person name="Parales R."/>
            <person name="Richardson P."/>
        </authorList>
    </citation>
    <scope>NUCLEOTIDE SEQUENCE [LARGE SCALE GENOMIC DNA]</scope>
    <source>
        <strain>ATCC 700007 / DSM 6899 / JCM 31910 / BCRC 17059 / LMG 24140 / F1</strain>
    </source>
</reference>
<feature type="chain" id="PRO_1000011704" description="GTPase Der">
    <location>
        <begin position="1"/>
        <end position="487"/>
    </location>
</feature>
<feature type="domain" description="EngA-type G 1">
    <location>
        <begin position="3"/>
        <end position="166"/>
    </location>
</feature>
<feature type="domain" description="EngA-type G 2">
    <location>
        <begin position="193"/>
        <end position="366"/>
    </location>
</feature>
<feature type="domain" description="KH-like" evidence="1">
    <location>
        <begin position="367"/>
        <end position="451"/>
    </location>
</feature>
<feature type="region of interest" description="Disordered" evidence="2">
    <location>
        <begin position="448"/>
        <end position="487"/>
    </location>
</feature>
<feature type="compositionally biased region" description="Basic and acidic residues" evidence="2">
    <location>
        <begin position="448"/>
        <end position="461"/>
    </location>
</feature>
<feature type="compositionally biased region" description="Basic residues" evidence="2">
    <location>
        <begin position="467"/>
        <end position="487"/>
    </location>
</feature>
<feature type="binding site" evidence="1">
    <location>
        <begin position="9"/>
        <end position="16"/>
    </location>
    <ligand>
        <name>GTP</name>
        <dbReference type="ChEBI" id="CHEBI:37565"/>
        <label>1</label>
    </ligand>
</feature>
<feature type="binding site" evidence="1">
    <location>
        <begin position="56"/>
        <end position="60"/>
    </location>
    <ligand>
        <name>GTP</name>
        <dbReference type="ChEBI" id="CHEBI:37565"/>
        <label>1</label>
    </ligand>
</feature>
<feature type="binding site" evidence="1">
    <location>
        <begin position="118"/>
        <end position="121"/>
    </location>
    <ligand>
        <name>GTP</name>
        <dbReference type="ChEBI" id="CHEBI:37565"/>
        <label>1</label>
    </ligand>
</feature>
<feature type="binding site" evidence="1">
    <location>
        <begin position="199"/>
        <end position="206"/>
    </location>
    <ligand>
        <name>GTP</name>
        <dbReference type="ChEBI" id="CHEBI:37565"/>
        <label>2</label>
    </ligand>
</feature>
<feature type="binding site" evidence="1">
    <location>
        <begin position="246"/>
        <end position="250"/>
    </location>
    <ligand>
        <name>GTP</name>
        <dbReference type="ChEBI" id="CHEBI:37565"/>
        <label>2</label>
    </ligand>
</feature>
<feature type="binding site" evidence="1">
    <location>
        <begin position="311"/>
        <end position="314"/>
    </location>
    <ligand>
        <name>GTP</name>
        <dbReference type="ChEBI" id="CHEBI:37565"/>
        <label>2</label>
    </ligand>
</feature>
<sequence length="487" mass="54099">MVPVIALVGRPNVGKSTMFNRLTKTRDAIVGDLSGLTRDRQYGDASWQGRSFILIDTGGITGDEVGMDEKMAEQSLMAIEEADYVLFLVDARAGMTAADQMIAEHLRKRNKAAILVANKIDNIDPDVARAEFSPMGMGNAIPVAGSQGRGISALMEAVLGHLPRDAEDEALEQDVAEGEEAVRIPGPSEKDGIKIAIIGRPNVGKSTLVNRMLGEERVVVYDEPGTTRDSIYIPFERDGDKYTFIDTAGVRKRGKIHEEVEKFSVVKTLQAIKDANVVIFVMDAREGVVDHDLNLLGFALEAGRAIVIALNKWDGMEPGERAYVKTELERRLFFVDFADIHFISALHGTGVGNLYKSVQAAFQSAVTRWPTSRLTQILEDAVSEHQPPMVNGRRIKLRYAHLGGANPPLIVIHGNQTDSIPKSYSRYLENTYRRVLKLVGTPIRIEYKGGENPYEGKKNTLTDRQVNKKRRLMSHHKKAEKKRRDKR</sequence>